<keyword id="KW-0687">Ribonucleoprotein</keyword>
<keyword id="KW-0689">Ribosomal protein</keyword>
<keyword id="KW-0694">RNA-binding</keyword>
<keyword id="KW-0699">rRNA-binding</keyword>
<comment type="function">
    <text evidence="1">One of two assembly initiator proteins, it binds directly to the 5'-end of the 23S rRNA, where it nucleates assembly of the 50S subunit.</text>
</comment>
<comment type="function">
    <text evidence="1">One of the proteins that surrounds the polypeptide exit tunnel on the outside of the subunit.</text>
</comment>
<comment type="subunit">
    <text evidence="1">Part of the 50S ribosomal subunit.</text>
</comment>
<comment type="similarity">
    <text evidence="1">Belongs to the universal ribosomal protein uL24 family.</text>
</comment>
<dbReference type="EMBL" id="CP001598">
    <property type="protein sequence ID" value="ACQ49324.1"/>
    <property type="molecule type" value="Genomic_DNA"/>
</dbReference>
<dbReference type="RefSeq" id="WP_000558200.1">
    <property type="nucleotide sequence ID" value="NC_012659.1"/>
</dbReference>
<dbReference type="SMR" id="C3P9R6"/>
<dbReference type="GeneID" id="93010932"/>
<dbReference type="KEGG" id="bai:BAA_0137"/>
<dbReference type="HOGENOM" id="CLU_093315_2_0_9"/>
<dbReference type="GO" id="GO:1990904">
    <property type="term" value="C:ribonucleoprotein complex"/>
    <property type="evidence" value="ECO:0007669"/>
    <property type="project" value="UniProtKB-KW"/>
</dbReference>
<dbReference type="GO" id="GO:0005840">
    <property type="term" value="C:ribosome"/>
    <property type="evidence" value="ECO:0007669"/>
    <property type="project" value="UniProtKB-KW"/>
</dbReference>
<dbReference type="GO" id="GO:0019843">
    <property type="term" value="F:rRNA binding"/>
    <property type="evidence" value="ECO:0007669"/>
    <property type="project" value="UniProtKB-UniRule"/>
</dbReference>
<dbReference type="GO" id="GO:0003735">
    <property type="term" value="F:structural constituent of ribosome"/>
    <property type="evidence" value="ECO:0007669"/>
    <property type="project" value="InterPro"/>
</dbReference>
<dbReference type="GO" id="GO:0006412">
    <property type="term" value="P:translation"/>
    <property type="evidence" value="ECO:0007669"/>
    <property type="project" value="UniProtKB-UniRule"/>
</dbReference>
<dbReference type="CDD" id="cd06089">
    <property type="entry name" value="KOW_RPL26"/>
    <property type="match status" value="1"/>
</dbReference>
<dbReference type="FunFam" id="2.30.30.30:FF:000004">
    <property type="entry name" value="50S ribosomal protein L24"/>
    <property type="match status" value="1"/>
</dbReference>
<dbReference type="Gene3D" id="2.30.30.30">
    <property type="match status" value="1"/>
</dbReference>
<dbReference type="HAMAP" id="MF_01326_B">
    <property type="entry name" value="Ribosomal_uL24_B"/>
    <property type="match status" value="1"/>
</dbReference>
<dbReference type="InterPro" id="IPR005824">
    <property type="entry name" value="KOW"/>
</dbReference>
<dbReference type="InterPro" id="IPR014722">
    <property type="entry name" value="Rib_uL2_dom2"/>
</dbReference>
<dbReference type="InterPro" id="IPR003256">
    <property type="entry name" value="Ribosomal_uL24"/>
</dbReference>
<dbReference type="InterPro" id="IPR005825">
    <property type="entry name" value="Ribosomal_uL24_CS"/>
</dbReference>
<dbReference type="InterPro" id="IPR041988">
    <property type="entry name" value="Ribosomal_uL24_KOW"/>
</dbReference>
<dbReference type="InterPro" id="IPR008991">
    <property type="entry name" value="Translation_prot_SH3-like_sf"/>
</dbReference>
<dbReference type="NCBIfam" id="TIGR01079">
    <property type="entry name" value="rplX_bact"/>
    <property type="match status" value="1"/>
</dbReference>
<dbReference type="PANTHER" id="PTHR12903">
    <property type="entry name" value="MITOCHONDRIAL RIBOSOMAL PROTEIN L24"/>
    <property type="match status" value="1"/>
</dbReference>
<dbReference type="Pfam" id="PF00467">
    <property type="entry name" value="KOW"/>
    <property type="match status" value="1"/>
</dbReference>
<dbReference type="Pfam" id="PF17136">
    <property type="entry name" value="ribosomal_L24"/>
    <property type="match status" value="1"/>
</dbReference>
<dbReference type="SMART" id="SM00739">
    <property type="entry name" value="KOW"/>
    <property type="match status" value="1"/>
</dbReference>
<dbReference type="SUPFAM" id="SSF50104">
    <property type="entry name" value="Translation proteins SH3-like domain"/>
    <property type="match status" value="1"/>
</dbReference>
<dbReference type="PROSITE" id="PS01108">
    <property type="entry name" value="RIBOSOMAL_L24"/>
    <property type="match status" value="1"/>
</dbReference>
<feature type="chain" id="PRO_1000165922" description="Large ribosomal subunit protein uL24">
    <location>
        <begin position="1"/>
        <end position="103"/>
    </location>
</feature>
<proteinExistence type="inferred from homology"/>
<accession>C3P9R6</accession>
<protein>
    <recommendedName>
        <fullName evidence="1">Large ribosomal subunit protein uL24</fullName>
    </recommendedName>
    <alternativeName>
        <fullName evidence="2">50S ribosomal protein L24</fullName>
    </alternativeName>
</protein>
<name>RL24_BACAA</name>
<sequence>MHVKKGDKVQVITGKDKGKQGVILVAFPKQNRVIVEGVNIVKKHSKPSQLNPQGGIITKEAPIHVSNVMILDPKTGEPTRVGFKVEDGKKVRIAKKSGELLDK</sequence>
<gene>
    <name evidence="1" type="primary">rplX</name>
    <name type="ordered locus">BAA_0137</name>
</gene>
<evidence type="ECO:0000255" key="1">
    <source>
        <dbReference type="HAMAP-Rule" id="MF_01326"/>
    </source>
</evidence>
<evidence type="ECO:0000305" key="2"/>
<organism>
    <name type="scientific">Bacillus anthracis (strain A0248)</name>
    <dbReference type="NCBI Taxonomy" id="592021"/>
    <lineage>
        <taxon>Bacteria</taxon>
        <taxon>Bacillati</taxon>
        <taxon>Bacillota</taxon>
        <taxon>Bacilli</taxon>
        <taxon>Bacillales</taxon>
        <taxon>Bacillaceae</taxon>
        <taxon>Bacillus</taxon>
        <taxon>Bacillus cereus group</taxon>
    </lineage>
</organism>
<reference key="1">
    <citation type="submission" date="2009-04" db="EMBL/GenBank/DDBJ databases">
        <title>Genome sequence of Bacillus anthracis A0248.</title>
        <authorList>
            <person name="Dodson R.J."/>
            <person name="Munk A.C."/>
            <person name="Bruce D."/>
            <person name="Detter C."/>
            <person name="Tapia R."/>
            <person name="Sutton G."/>
            <person name="Sims D."/>
            <person name="Brettin T."/>
        </authorList>
    </citation>
    <scope>NUCLEOTIDE SEQUENCE [LARGE SCALE GENOMIC DNA]</scope>
    <source>
        <strain>A0248</strain>
    </source>
</reference>